<keyword id="KW-0002">3D-structure</keyword>
<keyword id="KW-0007">Acetylation</keyword>
<keyword id="KW-0025">Alternative splicing</keyword>
<keyword id="KW-0446">Lipid-binding</keyword>
<keyword id="KW-0496">Mitochondrion</keyword>
<keyword id="KW-1274">Primary mitochondrial disease</keyword>
<keyword id="KW-1267">Proteomics identification</keyword>
<keyword id="KW-1185">Reference proteome</keyword>
<keyword id="KW-0809">Transit peptide</keyword>
<keyword id="KW-0831">Ubiquinone biosynthesis</keyword>
<keyword id="KW-0832">Ubl conjugation</keyword>
<organism>
    <name type="scientific">Homo sapiens</name>
    <name type="common">Human</name>
    <dbReference type="NCBI Taxonomy" id="9606"/>
    <lineage>
        <taxon>Eukaryota</taxon>
        <taxon>Metazoa</taxon>
        <taxon>Chordata</taxon>
        <taxon>Craniata</taxon>
        <taxon>Vertebrata</taxon>
        <taxon>Euteleostomi</taxon>
        <taxon>Mammalia</taxon>
        <taxon>Eutheria</taxon>
        <taxon>Euarchontoglires</taxon>
        <taxon>Primates</taxon>
        <taxon>Haplorrhini</taxon>
        <taxon>Catarrhini</taxon>
        <taxon>Hominidae</taxon>
        <taxon>Homo</taxon>
    </lineage>
</organism>
<comment type="function">
    <text evidence="5 6 9">Membrane-associated protein that warps the membrane surface to access and bind aromatic isoprenes with high specificity, including ubiquinone (CoQ) isoprene intermediates and presents them directly to COQ7, therefore facilitating the COQ7-mediated hydroxylase step (PubMed:25339443, PubMed:30661980, PubMed:38425362). Participates in the biosynthesis of coenzyme Q, also named ubiquinone, an essential lipid-soluble electron transporter for aerobic cellular respiration (PubMed:25339443, PubMed:30661980).</text>
</comment>
<comment type="pathway">
    <text evidence="1">Cofactor biosynthesis; ubiquinone biosynthesis.</text>
</comment>
<comment type="subunit">
    <text evidence="5 6 7">Homodimer (PubMed:25339443). Heterodimer; two heterodimers of COQ7:COQ9 come together on the same side of the lipid pseudo-bilayer and form a curved tetramer with a hydrophobic surface suitable for membrane interaction (PubMed:36306796). These two tetramers assemble into a soluble octamer with a pseudo-bilayer of lipids captured within (PubMed:36306796). Interacts with COQ7; this interaction allows ubiquinone (CoQ) isoprene intermediates presentation to COQ7 and facilitates the COQ7-mediated hydroxylase step (PubMed:25339443, PubMed:30661980, PubMed:36306796).</text>
</comment>
<comment type="interaction">
    <interactant intactId="EBI-724524">
        <id>O75208</id>
    </interactant>
    <interactant intactId="EBI-2876502">
        <id>Q96CM8</id>
        <label>ACSF2</label>
    </interactant>
    <organismsDiffer>false</organismsDiffer>
    <experiments>4</experiments>
</comment>
<comment type="interaction">
    <interactant intactId="EBI-724524">
        <id>O75208</id>
    </interactant>
    <interactant intactId="EBI-10827839">
        <id>Q15848</id>
        <label>ADIPOQ</label>
    </interactant>
    <organismsDiffer>false</organismsDiffer>
    <experiments>3</experiments>
</comment>
<comment type="interaction">
    <interactant intactId="EBI-724524">
        <id>O75208</id>
    </interactant>
    <interactant intactId="EBI-1210304">
        <id>P54886</id>
        <label>ALDH18A1</label>
    </interactant>
    <organismsDiffer>false</organismsDiffer>
    <experiments>3</experiments>
</comment>
<comment type="interaction">
    <interactant intactId="EBI-724524">
        <id>O75208</id>
    </interactant>
    <interactant intactId="EBI-3922513">
        <id>O95393</id>
        <label>BMP10</label>
    </interactant>
    <organismsDiffer>false</organismsDiffer>
    <experiments>3</experiments>
</comment>
<comment type="interaction">
    <interactant intactId="EBI-724524">
        <id>O75208</id>
    </interactant>
    <interactant intactId="EBI-10271156">
        <id>Q8NHW4</id>
        <label>CCL4L2</label>
    </interactant>
    <organismsDiffer>false</organismsDiffer>
    <experiments>3</experiments>
</comment>
<comment type="interaction">
    <interactant intactId="EBI-724524">
        <id>O75208</id>
    </interactant>
    <interactant intactId="EBI-12577722">
        <id>Q5HYK3</id>
        <label>COQ5</label>
    </interactant>
    <organismsDiffer>false</organismsDiffer>
    <experiments>11</experiments>
</comment>
<comment type="interaction">
    <interactant intactId="EBI-724524">
        <id>O75208</id>
    </interactant>
    <interactant intactId="EBI-11017131">
        <id>Q99807</id>
        <label>COQ7</label>
    </interactant>
    <organismsDiffer>false</organismsDiffer>
    <experiments>8</experiments>
</comment>
<comment type="interaction">
    <interactant intactId="EBI-724524">
        <id>O75208</id>
    </interactant>
    <interactant intactId="EBI-745535">
        <id>Q8NI60</id>
        <label>COQ8A</label>
    </interactant>
    <organismsDiffer>false</organismsDiffer>
    <experiments>11</experiments>
</comment>
<comment type="interaction">
    <interactant intactId="EBI-724524">
        <id>O75208</id>
    </interactant>
    <interactant intactId="EBI-12019274">
        <id>Q4LDR2</id>
        <label>CTXN3</label>
    </interactant>
    <organismsDiffer>false</organismsDiffer>
    <experiments>3</experiments>
</comment>
<comment type="interaction">
    <interactant intactId="EBI-724524">
        <id>O75208</id>
    </interactant>
    <interactant intactId="EBI-717654">
        <id>O14569</id>
        <label>CYB561D2</label>
    </interactant>
    <organismsDiffer>false</organismsDiffer>
    <experiments>3</experiments>
</comment>
<comment type="interaction">
    <interactant intactId="EBI-724524">
        <id>O75208</id>
    </interactant>
    <interactant intactId="EBI-2680384">
        <id>Q9BQA9</id>
        <label>CYBC1</label>
    </interactant>
    <organismsDiffer>false</organismsDiffer>
    <experiments>3</experiments>
</comment>
<comment type="interaction">
    <interactant intactId="EBI-724524">
        <id>O75208</id>
    </interactant>
    <interactant intactId="EBI-2339219">
        <id>Q08426</id>
        <label>EHHADH</label>
    </interactant>
    <organismsDiffer>false</organismsDiffer>
    <experiments>3</experiments>
</comment>
<comment type="interaction">
    <interactant intactId="EBI-724524">
        <id>O75208</id>
    </interactant>
    <interactant intactId="EBI-10226985">
        <id>Q10471</id>
        <label>GALNT2</label>
    </interactant>
    <organismsDiffer>false</organismsDiffer>
    <experiments>3</experiments>
</comment>
<comment type="interaction">
    <interactant intactId="EBI-724524">
        <id>O75208</id>
    </interactant>
    <interactant intactId="EBI-2806151">
        <id>P09601</id>
        <label>HMOX1</label>
    </interactant>
    <organismsDiffer>false</organismsDiffer>
    <experiments>3</experiments>
</comment>
<comment type="interaction">
    <interactant intactId="EBI-724524">
        <id>O75208</id>
    </interactant>
    <interactant intactId="EBI-8632435">
        <id>P43628</id>
        <label>KIR2DL3</label>
    </interactant>
    <organismsDiffer>false</organismsDiffer>
    <experiments>3</experiments>
</comment>
<comment type="interaction">
    <interactant intactId="EBI-724524">
        <id>O75208</id>
    </interactant>
    <interactant intactId="EBI-12866138">
        <id>A0A0C4DFN3</id>
        <label>MGLL</label>
    </interactant>
    <organismsDiffer>false</organismsDiffer>
    <experiments>3</experiments>
</comment>
<comment type="interaction">
    <interactant intactId="EBI-724524">
        <id>O75208</id>
    </interactant>
    <interactant intactId="EBI-1054848">
        <id>Q9P0S3</id>
        <label>ORMDL1</label>
    </interactant>
    <organismsDiffer>false</organismsDiffer>
    <experiments>3</experiments>
</comment>
<comment type="interaction">
    <interactant intactId="EBI-724524">
        <id>O75208</id>
    </interactant>
    <interactant intactId="EBI-3937430">
        <id>Q9NRY7</id>
        <label>PLSCR2</label>
    </interactant>
    <organismsDiffer>false</organismsDiffer>
    <experiments>3</experiments>
</comment>
<comment type="interaction">
    <interactant intactId="EBI-724524">
        <id>O75208</id>
    </interactant>
    <interactant intactId="EBI-14210385">
        <id>Q59EV6</id>
        <label>PPGB</label>
    </interactant>
    <organismsDiffer>false</organismsDiffer>
    <experiments>3</experiments>
</comment>
<comment type="interaction">
    <interactant intactId="EBI-724524">
        <id>O75208</id>
    </interactant>
    <interactant intactId="EBI-12056025">
        <id>Q14162</id>
        <label>SCARF1</label>
    </interactant>
    <organismsDiffer>false</organismsDiffer>
    <experiments>3</experiments>
</comment>
<comment type="interaction">
    <interactant intactId="EBI-724524">
        <id>O75208</id>
    </interactant>
    <interactant intactId="EBI-1394295">
        <id>Q13277</id>
        <label>STX3</label>
    </interactant>
    <organismsDiffer>false</organismsDiffer>
    <experiments>3</experiments>
</comment>
<comment type="interaction">
    <interactant intactId="EBI-724524">
        <id>O75208</id>
    </interactant>
    <interactant intactId="EBI-10329860">
        <id>Q9Y6I9</id>
        <label>TEX264</label>
    </interactant>
    <organismsDiffer>false</organismsDiffer>
    <experiments>3</experiments>
</comment>
<comment type="interaction">
    <interactant intactId="EBI-724524">
        <id>O75208</id>
    </interactant>
    <interactant intactId="EBI-2339195">
        <id>Q9P0S9</id>
        <label>TMEM14C</label>
    </interactant>
    <organismsDiffer>false</organismsDiffer>
    <experiments>3</experiments>
</comment>
<comment type="interaction">
    <interactant intactId="EBI-724524">
        <id>O75208</id>
    </interactant>
    <interactant intactId="EBI-8649725">
        <id>Q9BSE2</id>
        <label>TMEM79</label>
    </interactant>
    <organismsDiffer>false</organismsDiffer>
    <experiments>3</experiments>
</comment>
<comment type="interaction">
    <interactant intactId="EBI-724524">
        <id>O75208</id>
    </interactant>
    <interactant intactId="EBI-12015604">
        <id>Q8N2M4</id>
        <label>TMEM86A</label>
    </interactant>
    <organismsDiffer>false</organismsDiffer>
    <experiments>3</experiments>
</comment>
<comment type="interaction">
    <interactant intactId="EBI-724524">
        <id>O75208</id>
    </interactant>
    <interactant intactId="EBI-717441">
        <id>O14798</id>
        <label>TNFRSF10C</label>
    </interactant>
    <organismsDiffer>false</organismsDiffer>
    <experiments>3</experiments>
</comment>
<comment type="interaction">
    <interactant intactId="EBI-724524">
        <id>O75208</id>
    </interactant>
    <interactant intactId="EBI-765817">
        <id>Q9Y228</id>
        <label>TRAF3IP3</label>
    </interactant>
    <organismsDiffer>false</organismsDiffer>
    <experiments>3</experiments>
</comment>
<comment type="interaction">
    <interactant intactId="EBI-724524">
        <id>O75208</id>
    </interactant>
    <interactant intactId="EBI-12045841">
        <id>Q86UF1</id>
        <label>TSPAN33</label>
    </interactant>
    <organismsDiffer>false</organismsDiffer>
    <experiments>3</experiments>
</comment>
<comment type="interaction">
    <interactant intactId="EBI-724524">
        <id>O75208</id>
    </interactant>
    <interactant intactId="EBI-12190699">
        <id>Q6UX27-3</id>
        <label>VSTM1</label>
    </interactant>
    <organismsDiffer>false</organismsDiffer>
    <experiments>3</experiments>
</comment>
<comment type="interaction">
    <interactant intactId="EBI-724524">
        <id>O75208</id>
    </interactant>
    <interactant intactId="EBI-723529">
        <id>Q14508</id>
        <label>WFDC2</label>
    </interactant>
    <organismsDiffer>false</organismsDiffer>
    <experiments>3</experiments>
</comment>
<comment type="subcellular location">
    <subcellularLocation>
        <location evidence="1">Mitochondrion</location>
    </subcellularLocation>
    <text evidence="6">Associates with cardiolipin-rich membranes which leads to the lipid bilayer deformation and then accessing to membrane-bound lipids.</text>
</comment>
<comment type="alternative products">
    <event type="alternative splicing"/>
    <isoform>
        <id>O75208-1</id>
        <name>1</name>
        <sequence type="displayed"/>
    </isoform>
    <isoform>
        <id>O75208-2</id>
        <name>2</name>
        <sequence type="described" ref="VSP_017683 VSP_017684"/>
    </isoform>
</comment>
<comment type="domain">
    <text evidence="5">Structurally similar to the bacterial FadR protein (fatty acid metabolism regulator protein).</text>
</comment>
<comment type="PTM">
    <text evidence="8">In response to mitochondrial stress, the precursor protein is ubiquitinated by the SIFI complex in the cytoplasm before mitochondrial import, leading to its degradation (PubMed:38297121). Within the SIFI complex, UBR4 initiates ubiquitin chain that are further elongated or branched by KCMF1 (PubMed:38297121).</text>
</comment>
<comment type="disease" evidence="4">
    <disease id="DI-03448">
        <name>Coenzyme Q10 deficiency, primary, 5</name>
        <acronym>COQ10D5</acronym>
        <description>A form of coenzyme Q10 deficiency, an autosomal recessive disorder with variable manifestations consistent with 5 major phenotypes. The phenotypes include an encephalomyopathic form with seizures and ataxia; a multisystem infantile form with encephalopathy, cardiomyopathy and renal failure; a predominantly cerebellar form with ataxia and cerebellar atrophy; Leigh syndrome with growth retardation; and an isolated myopathic form.</description>
        <dbReference type="MIM" id="614654"/>
    </disease>
    <text>The disease is caused by variants affecting the gene represented in this entry.</text>
</comment>
<comment type="similarity">
    <text evidence="11">Belongs to the COQ9 family.</text>
</comment>
<comment type="sequence caution" evidence="11">
    <conflict type="frameshift">
        <sequence resource="EMBL-CDS" id="AAF29004"/>
    </conflict>
</comment>
<protein>
    <recommendedName>
        <fullName evidence="11">Ubiquinone biosynthesis protein COQ9, mitochondrial</fullName>
    </recommendedName>
</protein>
<reference key="1">
    <citation type="journal article" date="2000" name="Genome Res.">
        <title>Cloning and functional analysis of cDNAs with open reading frames for 300 previously undefined genes expressed in CD34+ hematopoietic stem/progenitor cells.</title>
        <authorList>
            <person name="Zhang Q.-H."/>
            <person name="Ye M."/>
            <person name="Wu X.-Y."/>
            <person name="Ren S.-X."/>
            <person name="Zhao M."/>
            <person name="Zhao C.-J."/>
            <person name="Fu G."/>
            <person name="Shen Y."/>
            <person name="Fan H.-Y."/>
            <person name="Lu G."/>
            <person name="Zhong M."/>
            <person name="Xu X.-R."/>
            <person name="Han Z.-G."/>
            <person name="Zhang J.-W."/>
            <person name="Tao J."/>
            <person name="Huang Q.-H."/>
            <person name="Zhou J."/>
            <person name="Hu G.-X."/>
            <person name="Gu J."/>
            <person name="Chen S.-J."/>
            <person name="Chen Z."/>
        </authorList>
    </citation>
    <scope>NUCLEOTIDE SEQUENCE [LARGE SCALE MRNA] (ISOFORM 1)</scope>
    <source>
        <tissue>Umbilical cord blood</tissue>
    </source>
</reference>
<reference key="2">
    <citation type="journal article" date="2004" name="Nat. Genet.">
        <title>Complete sequencing and characterization of 21,243 full-length human cDNAs.</title>
        <authorList>
            <person name="Ota T."/>
            <person name="Suzuki Y."/>
            <person name="Nishikawa T."/>
            <person name="Otsuki T."/>
            <person name="Sugiyama T."/>
            <person name="Irie R."/>
            <person name="Wakamatsu A."/>
            <person name="Hayashi K."/>
            <person name="Sato H."/>
            <person name="Nagai K."/>
            <person name="Kimura K."/>
            <person name="Makita H."/>
            <person name="Sekine M."/>
            <person name="Obayashi M."/>
            <person name="Nishi T."/>
            <person name="Shibahara T."/>
            <person name="Tanaka T."/>
            <person name="Ishii S."/>
            <person name="Yamamoto J."/>
            <person name="Saito K."/>
            <person name="Kawai Y."/>
            <person name="Isono Y."/>
            <person name="Nakamura Y."/>
            <person name="Nagahari K."/>
            <person name="Murakami K."/>
            <person name="Yasuda T."/>
            <person name="Iwayanagi T."/>
            <person name="Wagatsuma M."/>
            <person name="Shiratori A."/>
            <person name="Sudo H."/>
            <person name="Hosoiri T."/>
            <person name="Kaku Y."/>
            <person name="Kodaira H."/>
            <person name="Kondo H."/>
            <person name="Sugawara M."/>
            <person name="Takahashi M."/>
            <person name="Kanda K."/>
            <person name="Yokoi T."/>
            <person name="Furuya T."/>
            <person name="Kikkawa E."/>
            <person name="Omura Y."/>
            <person name="Abe K."/>
            <person name="Kamihara K."/>
            <person name="Katsuta N."/>
            <person name="Sato K."/>
            <person name="Tanikawa M."/>
            <person name="Yamazaki M."/>
            <person name="Ninomiya K."/>
            <person name="Ishibashi T."/>
            <person name="Yamashita H."/>
            <person name="Murakawa K."/>
            <person name="Fujimori K."/>
            <person name="Tanai H."/>
            <person name="Kimata M."/>
            <person name="Watanabe M."/>
            <person name="Hiraoka S."/>
            <person name="Chiba Y."/>
            <person name="Ishida S."/>
            <person name="Ono Y."/>
            <person name="Takiguchi S."/>
            <person name="Watanabe S."/>
            <person name="Yosida M."/>
            <person name="Hotuta T."/>
            <person name="Kusano J."/>
            <person name="Kanehori K."/>
            <person name="Takahashi-Fujii A."/>
            <person name="Hara H."/>
            <person name="Tanase T.-O."/>
            <person name="Nomura Y."/>
            <person name="Togiya S."/>
            <person name="Komai F."/>
            <person name="Hara R."/>
            <person name="Takeuchi K."/>
            <person name="Arita M."/>
            <person name="Imose N."/>
            <person name="Musashino K."/>
            <person name="Yuuki H."/>
            <person name="Oshima A."/>
            <person name="Sasaki N."/>
            <person name="Aotsuka S."/>
            <person name="Yoshikawa Y."/>
            <person name="Matsunawa H."/>
            <person name="Ichihara T."/>
            <person name="Shiohata N."/>
            <person name="Sano S."/>
            <person name="Moriya S."/>
            <person name="Momiyama H."/>
            <person name="Satoh N."/>
            <person name="Takami S."/>
            <person name="Terashima Y."/>
            <person name="Suzuki O."/>
            <person name="Nakagawa S."/>
            <person name="Senoh A."/>
            <person name="Mizoguchi H."/>
            <person name="Goto Y."/>
            <person name="Shimizu F."/>
            <person name="Wakebe H."/>
            <person name="Hishigaki H."/>
            <person name="Watanabe T."/>
            <person name="Sugiyama A."/>
            <person name="Takemoto M."/>
            <person name="Kawakami B."/>
            <person name="Yamazaki M."/>
            <person name="Watanabe K."/>
            <person name="Kumagai A."/>
            <person name="Itakura S."/>
            <person name="Fukuzumi Y."/>
            <person name="Fujimori Y."/>
            <person name="Komiyama M."/>
            <person name="Tashiro H."/>
            <person name="Tanigami A."/>
            <person name="Fujiwara T."/>
            <person name="Ono T."/>
            <person name="Yamada K."/>
            <person name="Fujii Y."/>
            <person name="Ozaki K."/>
            <person name="Hirao M."/>
            <person name="Ohmori Y."/>
            <person name="Kawabata A."/>
            <person name="Hikiji T."/>
            <person name="Kobatake N."/>
            <person name="Inagaki H."/>
            <person name="Ikema Y."/>
            <person name="Okamoto S."/>
            <person name="Okitani R."/>
            <person name="Kawakami T."/>
            <person name="Noguchi S."/>
            <person name="Itoh T."/>
            <person name="Shigeta K."/>
            <person name="Senba T."/>
            <person name="Matsumura K."/>
            <person name="Nakajima Y."/>
            <person name="Mizuno T."/>
            <person name="Morinaga M."/>
            <person name="Sasaki M."/>
            <person name="Togashi T."/>
            <person name="Oyama M."/>
            <person name="Hata H."/>
            <person name="Watanabe M."/>
            <person name="Komatsu T."/>
            <person name="Mizushima-Sugano J."/>
            <person name="Satoh T."/>
            <person name="Shirai Y."/>
            <person name="Takahashi Y."/>
            <person name="Nakagawa K."/>
            <person name="Okumura K."/>
            <person name="Nagase T."/>
            <person name="Nomura N."/>
            <person name="Kikuchi H."/>
            <person name="Masuho Y."/>
            <person name="Yamashita R."/>
            <person name="Nakai K."/>
            <person name="Yada T."/>
            <person name="Nakamura Y."/>
            <person name="Ohara O."/>
            <person name="Isogai T."/>
            <person name="Sugano S."/>
        </authorList>
    </citation>
    <scope>NUCLEOTIDE SEQUENCE [LARGE SCALE MRNA] (ISOFORM 1)</scope>
    <source>
        <tissue>Heart</tissue>
    </source>
</reference>
<reference key="3">
    <citation type="journal article" date="2005" name="DNA Res.">
        <title>Signal sequence and keyword trap in silico for selection of full-length human cDNAs encoding secretion or membrane proteins from oligo-capped cDNA libraries.</title>
        <authorList>
            <person name="Otsuki T."/>
            <person name="Ota T."/>
            <person name="Nishikawa T."/>
            <person name="Hayashi K."/>
            <person name="Suzuki Y."/>
            <person name="Yamamoto J."/>
            <person name="Wakamatsu A."/>
            <person name="Kimura K."/>
            <person name="Sakamoto K."/>
            <person name="Hatano N."/>
            <person name="Kawai Y."/>
            <person name="Ishii S."/>
            <person name="Saito K."/>
            <person name="Kojima S."/>
            <person name="Sugiyama T."/>
            <person name="Ono T."/>
            <person name="Okano K."/>
            <person name="Yoshikawa Y."/>
            <person name="Aotsuka S."/>
            <person name="Sasaki N."/>
            <person name="Hattori A."/>
            <person name="Okumura K."/>
            <person name="Nagai K."/>
            <person name="Sugano S."/>
            <person name="Isogai T."/>
        </authorList>
    </citation>
    <scope>NUCLEOTIDE SEQUENCE [LARGE SCALE MRNA] (ISOFORM 2)</scope>
</reference>
<reference key="4">
    <citation type="journal article" date="1999" name="Genomics">
        <title>Genome duplications and other features in 12 Mb of DNA sequence from human chromosome 16p and 16q.</title>
        <authorList>
            <person name="Loftus B.J."/>
            <person name="Kim U.-J."/>
            <person name="Sneddon V.P."/>
            <person name="Kalush F."/>
            <person name="Brandon R."/>
            <person name="Fuhrmann J."/>
            <person name="Mason T."/>
            <person name="Crosby M.L."/>
            <person name="Barnstead M."/>
            <person name="Cronin L."/>
            <person name="Mays A.D."/>
            <person name="Cao Y."/>
            <person name="Xu R.X."/>
            <person name="Kang H.-L."/>
            <person name="Mitchell S."/>
            <person name="Eichler E.E."/>
            <person name="Harris P.C."/>
            <person name="Venter J.C."/>
            <person name="Adams M.D."/>
        </authorList>
    </citation>
    <scope>NUCLEOTIDE SEQUENCE [LARGE SCALE GENOMIC DNA]</scope>
</reference>
<reference key="5">
    <citation type="submission" date="2005-07" db="EMBL/GenBank/DDBJ databases">
        <authorList>
            <person name="Mural R.J."/>
            <person name="Istrail S."/>
            <person name="Sutton G.G."/>
            <person name="Florea L."/>
            <person name="Halpern A.L."/>
            <person name="Mobarry C.M."/>
            <person name="Lippert R."/>
            <person name="Walenz B."/>
            <person name="Shatkay H."/>
            <person name="Dew I."/>
            <person name="Miller J.R."/>
            <person name="Flanigan M.J."/>
            <person name="Edwards N.J."/>
            <person name="Bolanos R."/>
            <person name="Fasulo D."/>
            <person name="Halldorsson B.V."/>
            <person name="Hannenhalli S."/>
            <person name="Turner R."/>
            <person name="Yooseph S."/>
            <person name="Lu F."/>
            <person name="Nusskern D.R."/>
            <person name="Shue B.C."/>
            <person name="Zheng X.H."/>
            <person name="Zhong F."/>
            <person name="Delcher A.L."/>
            <person name="Huson D.H."/>
            <person name="Kravitz S.A."/>
            <person name="Mouchard L."/>
            <person name="Reinert K."/>
            <person name="Remington K.A."/>
            <person name="Clark A.G."/>
            <person name="Waterman M.S."/>
            <person name="Eichler E.E."/>
            <person name="Adams M.D."/>
            <person name="Hunkapiller M.W."/>
            <person name="Myers E.W."/>
            <person name="Venter J.C."/>
        </authorList>
    </citation>
    <scope>NUCLEOTIDE SEQUENCE [LARGE SCALE GENOMIC DNA]</scope>
</reference>
<reference key="6">
    <citation type="journal article" date="2004" name="Genome Res.">
        <title>The status, quality, and expansion of the NIH full-length cDNA project: the Mammalian Gene Collection (MGC).</title>
        <authorList>
            <consortium name="The MGC Project Team"/>
        </authorList>
    </citation>
    <scope>NUCLEOTIDE SEQUENCE [LARGE SCALE MRNA] (ISOFORM 1)</scope>
    <source>
        <tissue>Lung</tissue>
        <tissue>Skin</tissue>
        <tissue>Uterus</tissue>
    </source>
</reference>
<reference key="7">
    <citation type="journal article" date="2001" name="Genome Res.">
        <title>Towards a catalog of human genes and proteins: sequencing and analysis of 500 novel complete protein coding human cDNAs.</title>
        <authorList>
            <person name="Wiemann S."/>
            <person name="Weil B."/>
            <person name="Wellenreuther R."/>
            <person name="Gassenhuber J."/>
            <person name="Glassl S."/>
            <person name="Ansorge W."/>
            <person name="Boecher M."/>
            <person name="Bloecker H."/>
            <person name="Bauersachs S."/>
            <person name="Blum H."/>
            <person name="Lauber J."/>
            <person name="Duesterhoeft A."/>
            <person name="Beyer A."/>
            <person name="Koehrer K."/>
            <person name="Strack N."/>
            <person name="Mewes H.-W."/>
            <person name="Ottenwaelder B."/>
            <person name="Obermaier B."/>
            <person name="Tampe J."/>
            <person name="Heubner D."/>
            <person name="Wambutt R."/>
            <person name="Korn B."/>
            <person name="Klein M."/>
            <person name="Poustka A."/>
        </authorList>
    </citation>
    <scope>NUCLEOTIDE SEQUENCE [LARGE SCALE MRNA] OF 203-318 (ISOFORM 1)</scope>
    <source>
        <tissue>Testis</tissue>
    </source>
</reference>
<reference key="8">
    <citation type="journal article" date="2009" name="Am. J. Hum. Genet.">
        <title>A nonsense mutation in COQ9 causes autosomal-recessive neonatal-onset primary coenzyme Q10 deficiency: a potentially treatable form of mitochondrial disease.</title>
        <authorList>
            <person name="Duncan A.J."/>
            <person name="Bitner-Glindzicz M."/>
            <person name="Meunier B."/>
            <person name="Costello H."/>
            <person name="Hargreaves I.P."/>
            <person name="Lopez L.C."/>
            <person name="Hirano M."/>
            <person name="Quinzii C.M."/>
            <person name="Sadowski M.I."/>
            <person name="Hardy J."/>
            <person name="Singleton A."/>
            <person name="Clayton P.T."/>
            <person name="Rahman S."/>
        </authorList>
    </citation>
    <scope>INVOLVEMENT IN COQ10D5</scope>
</reference>
<reference key="9">
    <citation type="journal article" date="2011" name="BMC Syst. Biol.">
        <title>Initial characterization of the human central proteome.</title>
        <authorList>
            <person name="Burkard T.R."/>
            <person name="Planyavsky M."/>
            <person name="Kaupe I."/>
            <person name="Breitwieser F.P."/>
            <person name="Buerckstuemmer T."/>
            <person name="Bennett K.L."/>
            <person name="Superti-Furga G."/>
            <person name="Colinge J."/>
        </authorList>
    </citation>
    <scope>IDENTIFICATION BY MASS SPECTROMETRY [LARGE SCALE ANALYSIS]</scope>
</reference>
<reference key="10">
    <citation type="journal article" date="2014" name="J. Proteomics">
        <title>An enzyme assisted RP-RPLC approach for in-depth analysis of human liver phosphoproteome.</title>
        <authorList>
            <person name="Bian Y."/>
            <person name="Song C."/>
            <person name="Cheng K."/>
            <person name="Dong M."/>
            <person name="Wang F."/>
            <person name="Huang J."/>
            <person name="Sun D."/>
            <person name="Wang L."/>
            <person name="Ye M."/>
            <person name="Zou H."/>
        </authorList>
    </citation>
    <scope>IDENTIFICATION BY MASS SPECTROMETRY [LARGE SCALE ANALYSIS]</scope>
    <source>
        <tissue>Liver</tissue>
    </source>
</reference>
<reference key="11">
    <citation type="journal article" date="2015" name="Proteomics">
        <title>N-terminome analysis of the human mitochondrial proteome.</title>
        <authorList>
            <person name="Vaca Jacome A.S."/>
            <person name="Rabilloud T."/>
            <person name="Schaeffer-Reiss C."/>
            <person name="Rompais M."/>
            <person name="Ayoub D."/>
            <person name="Lane L."/>
            <person name="Bairoch A."/>
            <person name="Van Dorsselaer A."/>
            <person name="Carapito C."/>
        </authorList>
    </citation>
    <scope>IDENTIFICATION BY MASS SPECTROMETRY [LARGE SCALE ANALYSIS]</scope>
</reference>
<reference key="12">
    <citation type="journal article" date="2024" name="Nature">
        <title>Stress response silencing by an E3 ligase mutated in neurodegeneration.</title>
        <authorList>
            <person name="Haakonsen D.L."/>
            <person name="Heider M."/>
            <person name="Ingersoll A.J."/>
            <person name="Vodehnal K."/>
            <person name="Witus S.R."/>
            <person name="Uenaka T."/>
            <person name="Wernig M."/>
            <person name="Rape M."/>
        </authorList>
    </citation>
    <scope>UBIQUITINATION</scope>
</reference>
<reference key="13">
    <citation type="journal article" date="2024" name="Nat. Catal.">
        <title>In vitro construction of the COQ metabolon unveils the molecular determinants of coenzyme Q biosynthesis.</title>
        <authorList>
            <person name="Nicoll C.R."/>
            <person name="Alvigini L."/>
            <person name="Gottinger A."/>
            <person name="Cecchini D."/>
            <person name="Mannucci B."/>
            <person name="Corana F."/>
            <person name="Mascotti M.L."/>
            <person name="Mattevi A."/>
        </authorList>
    </citation>
    <scope>FUNCTION</scope>
    <scope>IDENTIFICATION BY MASS SPECTROMETRY</scope>
</reference>
<reference evidence="13" key="14">
    <citation type="journal article" date="2014" name="Proc. Natl. Acad. Sci. U.S.A.">
        <title>Mitochondrial COQ9 is a lipid-binding protein that associates with COQ7 to enable coenzyme Q biosynthesis.</title>
        <authorList>
            <person name="Lohman D.C."/>
            <person name="Forouhar F."/>
            <person name="Beebe E.T."/>
            <person name="Stefely M.S."/>
            <person name="Minogue C.E."/>
            <person name="Ulbrich A."/>
            <person name="Stefely J.A."/>
            <person name="Sukumar S."/>
            <person name="Luna-Sanchez M."/>
            <person name="Jochem A."/>
            <person name="Lew S."/>
            <person name="Seetharaman J."/>
            <person name="Xiao R."/>
            <person name="Wang H."/>
            <person name="Westphall M.S."/>
            <person name="Wrobel R.L."/>
            <person name="Everett J.K."/>
            <person name="Mitchell J.C."/>
            <person name="Lopez L.C."/>
            <person name="Coon J.J."/>
            <person name="Tong L."/>
            <person name="Pagliarini D.J."/>
        </authorList>
    </citation>
    <scope>X-RAY CRYSTALLOGRAPHY (2.39 ANGSTROMS) OF 84-318 IN COMPLEX WITH DI-PALMITOYL-3-SN-PHOSPHATIDYLETHANOLAMINE</scope>
    <scope>FUNCTION</scope>
    <scope>LIPID-BINDING</scope>
    <scope>INTERACTION WITH COQ7</scope>
    <scope>SUBUNIT</scope>
    <scope>DOMAIN</scope>
    <scope>MUTAGENESIS OF LEU-190; MET-227; ASP-237; TRP-240; TYR-241 AND LEU-256</scope>
</reference>
<reference evidence="14 15" key="15">
    <citation type="journal article" date="2019" name="Mol. Cell">
        <title>An Isoprene Lipid-Binding Protein Promotes Eukaryotic Coenzyme Q Biosynthesis.</title>
        <authorList>
            <person name="Lohman D.C."/>
            <person name="Aydin D."/>
            <person name="Von Bank H.C."/>
            <person name="Smith R.W."/>
            <person name="Linke V."/>
            <person name="Weisenhorn E."/>
            <person name="McDevitt M.T."/>
            <person name="Hutchins P."/>
            <person name="Wilkerson E.M."/>
            <person name="Wancewicz B."/>
            <person name="Russell J."/>
            <person name="Stefely M.S."/>
            <person name="Beebe E.T."/>
            <person name="Jochem A."/>
            <person name="Coon J.J."/>
            <person name="Bingman C.A."/>
            <person name="Dal Peraro M."/>
            <person name="Pagliarini D.J."/>
        </authorList>
    </citation>
    <scope>X-RAY CRYSTALLOGRAPHY (2.00 ANGSTROMS) OF 79-287 IN COMPLEX WITH DI-PALMITOYL-3-SN-PHOSPHATIDYLETHANOLAMINE</scope>
    <scope>AROMATIC ISOPRENES BINDING</scope>
    <scope>MUTAGENESIS OF LYS-288; VAL-290; LYS-291; LEU-297; VAL-298; LEU-301 AND MET-302</scope>
    <scope>INTERACTION WITH COQ7</scope>
    <scope>FUNCTION</scope>
</reference>
<reference evidence="16 17" key="16">
    <citation type="journal article" date="2022" name="Mol. Cell">
        <title>Structure and functionality of a multimeric human COQ7:COQ9 complex.</title>
        <authorList>
            <person name="Manicki M."/>
            <person name="Aydin H."/>
            <person name="Abriata L.A."/>
            <person name="Overmyer K.A."/>
            <person name="Guerra R.M."/>
            <person name="Coon J.J."/>
            <person name="Dal Peraro M."/>
            <person name="Frost A."/>
            <person name="Pagliarini D.J."/>
        </authorList>
    </citation>
    <scope>STRUCTURE BY ELECTRON MICROSCOPY (2.40 ANGSTROMS)IN COMPLEX WITH BOUND MEMBRANE LIPIDS; COQ7</scope>
    <scope>INTERACTION WITH COQ7</scope>
    <scope>SUBUNIT</scope>
    <scope>MUTAGENESIS OF TRP-240</scope>
</reference>
<feature type="transit peptide" description="Mitochondrion" evidence="2">
    <location>
        <begin position="1"/>
        <end position="44"/>
    </location>
</feature>
<feature type="chain" id="PRO_0000228637" description="Ubiquinone biosynthesis protein COQ9, mitochondrial">
    <location>
        <begin position="45"/>
        <end position="318"/>
    </location>
</feature>
<feature type="region of interest" description="Disordered" evidence="3">
    <location>
        <begin position="44"/>
        <end position="98"/>
    </location>
</feature>
<feature type="short sequence motif" description="SIFI-degron" evidence="8">
    <location>
        <begin position="16"/>
        <end position="31"/>
    </location>
</feature>
<feature type="compositionally biased region" description="Polar residues" evidence="3">
    <location>
        <begin position="52"/>
        <end position="66"/>
    </location>
</feature>
<feature type="compositionally biased region" description="Acidic residues" evidence="3">
    <location>
        <begin position="86"/>
        <end position="97"/>
    </location>
</feature>
<feature type="binding site" evidence="5 6 13 14">
    <location>
        <position position="244"/>
    </location>
    <ligand>
        <name>a 1,2-diacylglycero-3-phosphoethanolamine</name>
        <dbReference type="ChEBI" id="CHEBI:57613"/>
    </ligand>
</feature>
<feature type="modified residue" description="N6-acetyllysine" evidence="1">
    <location>
        <position position="175"/>
    </location>
</feature>
<feature type="splice variant" id="VSP_017683" description="In isoform 2." evidence="10">
    <original>SLGLSSAAA</original>
    <variation>VCIGEGGAT</variation>
    <location>
        <begin position="127"/>
        <end position="135"/>
    </location>
</feature>
<feature type="splice variant" id="VSP_017684" description="In isoform 2." evidence="10">
    <location>
        <begin position="136"/>
        <end position="318"/>
    </location>
</feature>
<feature type="mutagenesis site" description="Impairs interaction with COQ7." evidence="5">
    <original>L</original>
    <variation>E</variation>
    <location>
        <position position="190"/>
    </location>
</feature>
<feature type="mutagenesis site" description="Impairs interaction with COQ7." evidence="5">
    <original>M</original>
    <variation>E</variation>
    <location>
        <position position="227"/>
    </location>
</feature>
<feature type="mutagenesis site" description="Impairs interaction with COQ7." evidence="5">
    <original>D</original>
    <variation>K</variation>
    <location>
        <position position="237"/>
    </location>
</feature>
<feature type="mutagenesis site" description="Abolishes interaction with COQ7." evidence="5">
    <original>W</original>
    <variation>D</variation>
    <variation>K</variation>
    <location>
        <position position="240"/>
    </location>
</feature>
<feature type="mutagenesis site" description="Disrupts the octomeric COQ7:COQ9 complex." evidence="7">
    <original>W</original>
    <variation>K</variation>
    <location>
        <position position="240"/>
    </location>
</feature>
<feature type="mutagenesis site" description="Abolishes interaction with COQ7." evidence="5">
    <original>Y</original>
    <variation>D</variation>
    <variation>K</variation>
    <location>
        <position position="241"/>
    </location>
</feature>
<feature type="mutagenesis site" description="Impairs interaction with COQ7." evidence="5">
    <original>L</original>
    <variation>K</variation>
    <location>
        <position position="256"/>
    </location>
</feature>
<feature type="mutagenesis site" description="Decreases membrane association; when associated with A-291." evidence="6">
    <original>K</original>
    <variation>A</variation>
    <location>
        <position position="288"/>
    </location>
</feature>
<feature type="mutagenesis site" description="Significantly decreases membrane association; when associated with A-297; A-298; A-301 and A-302." evidence="6">
    <original>V</original>
    <variation>A</variation>
    <location>
        <position position="290"/>
    </location>
</feature>
<feature type="mutagenesis site" description="Decreases membrane association by more than 60%; when associated with A-297; A-298; A-301 and A-302." evidence="6">
    <original>V</original>
    <variation>S</variation>
    <location>
        <position position="290"/>
    </location>
</feature>
<feature type="mutagenesis site" description="Decreases membrane association; when associated with A-288." evidence="6">
    <original>K</original>
    <variation>A</variation>
    <location>
        <position position="291"/>
    </location>
</feature>
<feature type="mutagenesis site" description="Significantly decreases membrane association; when associated with A-290; A-298; A-301 and A-302." evidence="6">
    <original>L</original>
    <variation>A</variation>
    <location>
        <position position="297"/>
    </location>
</feature>
<feature type="mutagenesis site" description="Decreases membrane association by more than 60%; when associated with A-290; A-298; A-301 and A-302." evidence="6">
    <original>L</original>
    <variation>S</variation>
    <location>
        <position position="297"/>
    </location>
</feature>
<feature type="mutagenesis site" description="Significantly decreases membrane association; when associated with A-290; A-297; A-301 and A-302." evidence="6">
    <original>V</original>
    <variation>A</variation>
    <location>
        <position position="298"/>
    </location>
</feature>
<feature type="mutagenesis site" description="Decreases membrane association by more than 60%; when associated with A-290; A-297; A-301 and A-302." evidence="6">
    <original>V</original>
    <variation>S</variation>
    <location>
        <position position="298"/>
    </location>
</feature>
<feature type="mutagenesis site" description="Significantly decreases membrane association; when associated with A-290; A-297; A-298 and A-302." evidence="6">
    <original>L</original>
    <variation>A</variation>
    <location>
        <position position="301"/>
    </location>
</feature>
<feature type="mutagenesis site" description="Decreases membrane association by more than 60%; when associated with A-290; A-297; A-298 and A-302." evidence="6">
    <original>L</original>
    <variation>S</variation>
    <location>
        <position position="301"/>
    </location>
</feature>
<feature type="mutagenesis site" description="Significantly decreases membrane association; when associated with A-290; A-297; A-298 and A-301." evidence="6">
    <original>M</original>
    <variation>A</variation>
    <location>
        <position position="302"/>
    </location>
</feature>
<feature type="mutagenesis site" description="Decreases membrane association by more than 60%; when associated with A-290; A-297; A-298 and A-301." evidence="6">
    <original>M</original>
    <variation>S</variation>
    <location>
        <position position="302"/>
    </location>
</feature>
<feature type="helix" evidence="18">
    <location>
        <begin position="96"/>
        <end position="108"/>
    </location>
</feature>
<feature type="helix" evidence="18">
    <location>
        <begin position="111"/>
        <end position="114"/>
    </location>
</feature>
<feature type="helix" evidence="18">
    <location>
        <begin position="118"/>
        <end position="127"/>
    </location>
</feature>
<feature type="helix" evidence="18">
    <location>
        <begin position="132"/>
        <end position="137"/>
    </location>
</feature>
<feature type="strand" evidence="18">
    <location>
        <begin position="140"/>
        <end position="142"/>
    </location>
</feature>
<feature type="helix" evidence="18">
    <location>
        <begin position="143"/>
        <end position="169"/>
    </location>
</feature>
<feature type="helix" evidence="18">
    <location>
        <begin position="178"/>
        <end position="191"/>
    </location>
</feature>
<feature type="helix" evidence="18">
    <location>
        <begin position="192"/>
        <end position="199"/>
    </location>
</feature>
<feature type="helix" evidence="18">
    <location>
        <begin position="200"/>
        <end position="207"/>
    </location>
</feature>
<feature type="helix" evidence="18">
    <location>
        <begin position="210"/>
        <end position="212"/>
    </location>
</feature>
<feature type="helix" evidence="18">
    <location>
        <begin position="213"/>
        <end position="231"/>
    </location>
</feature>
<feature type="helix" evidence="18">
    <location>
        <begin position="240"/>
        <end position="259"/>
    </location>
</feature>
<feature type="helix" evidence="18">
    <location>
        <begin position="264"/>
        <end position="266"/>
    </location>
</feature>
<feature type="helix" evidence="18">
    <location>
        <begin position="267"/>
        <end position="282"/>
    </location>
</feature>
<feature type="helix" evidence="18">
    <location>
        <begin position="287"/>
        <end position="309"/>
    </location>
</feature>
<accession>O75208</accession>
<accession>A8K3L2</accession>
<accession>Q7L5V7</accession>
<accession>Q7Z5T6</accession>
<accession>Q8NBL4</accession>
<accession>Q9NTJ2</accession>
<accession>Q9P056</accession>
<name>COQ9_HUMAN</name>
<dbReference type="EMBL" id="AF161444">
    <property type="protein sequence ID" value="AAF29004.1"/>
    <property type="status" value="ALT_FRAME"/>
    <property type="molecule type" value="mRNA"/>
</dbReference>
<dbReference type="EMBL" id="AK075438">
    <property type="protein sequence ID" value="BAC11621.1"/>
    <property type="molecule type" value="mRNA"/>
</dbReference>
<dbReference type="EMBL" id="AK290627">
    <property type="protein sequence ID" value="BAF83316.1"/>
    <property type="molecule type" value="mRNA"/>
</dbReference>
<dbReference type="EMBL" id="AC004382">
    <property type="protein sequence ID" value="AAC24313.1"/>
    <property type="molecule type" value="Genomic_DNA"/>
</dbReference>
<dbReference type="EMBL" id="CH471092">
    <property type="protein sequence ID" value="EAW82928.1"/>
    <property type="molecule type" value="Genomic_DNA"/>
</dbReference>
<dbReference type="EMBL" id="BC001478">
    <property type="protein sequence ID" value="AAH01478.2"/>
    <property type="molecule type" value="mRNA"/>
</dbReference>
<dbReference type="EMBL" id="BC054340">
    <property type="protein sequence ID" value="AAH54340.2"/>
    <property type="molecule type" value="mRNA"/>
</dbReference>
<dbReference type="EMBL" id="BC064946">
    <property type="protein sequence ID" value="AAH64946.1"/>
    <property type="molecule type" value="mRNA"/>
</dbReference>
<dbReference type="EMBL" id="AL136884">
    <property type="protein sequence ID" value="CAB66818.2"/>
    <property type="molecule type" value="mRNA"/>
</dbReference>
<dbReference type="CCDS" id="CCDS32459.1">
    <molecule id="O75208-1"/>
</dbReference>
<dbReference type="PIR" id="T46490">
    <property type="entry name" value="T46490"/>
</dbReference>
<dbReference type="RefSeq" id="NP_064708.1">
    <molecule id="O75208-1"/>
    <property type="nucleotide sequence ID" value="NM_020312.4"/>
</dbReference>
<dbReference type="PDB" id="4RHP">
    <property type="method" value="X-ray"/>
    <property type="resolution" value="2.39 A"/>
    <property type="chains" value="A/B=84-318"/>
</dbReference>
<dbReference type="PDB" id="6AWL">
    <property type="method" value="X-ray"/>
    <property type="resolution" value="2.00 A"/>
    <property type="chains" value="A/B=1-318"/>
</dbReference>
<dbReference type="PDB" id="6DEW">
    <property type="method" value="X-ray"/>
    <property type="resolution" value="2.00 A"/>
    <property type="chains" value="A/B/C/D/E/F=79-287"/>
</dbReference>
<dbReference type="PDB" id="7SSP">
    <property type="method" value="EM"/>
    <property type="resolution" value="3.50 A"/>
    <property type="chains" value="A/B/C/D=1-318"/>
</dbReference>
<dbReference type="PDB" id="7SSS">
    <property type="method" value="EM"/>
    <property type="resolution" value="2.40 A"/>
    <property type="chains" value="A/B/C/D=1-318"/>
</dbReference>
<dbReference type="PDBsum" id="4RHP"/>
<dbReference type="PDBsum" id="6AWL"/>
<dbReference type="PDBsum" id="6DEW"/>
<dbReference type="PDBsum" id="7SSP"/>
<dbReference type="PDBsum" id="7SSS"/>
<dbReference type="EMDB" id="EMD-25412"/>
<dbReference type="EMDB" id="EMD-25413"/>
<dbReference type="SMR" id="O75208"/>
<dbReference type="BioGRID" id="121326">
    <property type="interactions" value="216"/>
</dbReference>
<dbReference type="ComplexPortal" id="CPX-3642">
    <property type="entry name" value="CoQ biosynthetic complex"/>
</dbReference>
<dbReference type="FunCoup" id="O75208">
    <property type="interactions" value="1119"/>
</dbReference>
<dbReference type="IntAct" id="O75208">
    <property type="interactions" value="248"/>
</dbReference>
<dbReference type="STRING" id="9606.ENSP00000262507"/>
<dbReference type="GlyGen" id="O75208">
    <property type="glycosylation" value="2 sites, 1 N-linked glycan (1 site), 1 O-linked glycan (1 site)"/>
</dbReference>
<dbReference type="iPTMnet" id="O75208"/>
<dbReference type="PhosphoSitePlus" id="O75208"/>
<dbReference type="BioMuta" id="COQ9"/>
<dbReference type="jPOST" id="O75208"/>
<dbReference type="MassIVE" id="O75208"/>
<dbReference type="PaxDb" id="9606-ENSP00000262507"/>
<dbReference type="PeptideAtlas" id="O75208"/>
<dbReference type="ProteomicsDB" id="49869">
    <molecule id="O75208-1"/>
</dbReference>
<dbReference type="ProteomicsDB" id="49870">
    <molecule id="O75208-2"/>
</dbReference>
<dbReference type="Pumba" id="O75208"/>
<dbReference type="TopDownProteomics" id="O75208-1">
    <molecule id="O75208-1"/>
</dbReference>
<dbReference type="Antibodypedia" id="44070">
    <property type="antibodies" value="115 antibodies from 24 providers"/>
</dbReference>
<dbReference type="DNASU" id="57017"/>
<dbReference type="Ensembl" id="ENST00000262507.11">
    <molecule id="O75208-1"/>
    <property type="protein sequence ID" value="ENSP00000262507.5"/>
    <property type="gene ID" value="ENSG00000088682.14"/>
</dbReference>
<dbReference type="GeneID" id="57017"/>
<dbReference type="KEGG" id="hsa:57017"/>
<dbReference type="MANE-Select" id="ENST00000262507.11">
    <property type="protein sequence ID" value="ENSP00000262507.5"/>
    <property type="RefSeq nucleotide sequence ID" value="NM_020312.4"/>
    <property type="RefSeq protein sequence ID" value="NP_064708.1"/>
</dbReference>
<dbReference type="UCSC" id="uc002elq.4">
    <molecule id="O75208-1"/>
    <property type="organism name" value="human"/>
</dbReference>
<dbReference type="AGR" id="HGNC:25302"/>
<dbReference type="CTD" id="57017"/>
<dbReference type="DisGeNET" id="57017"/>
<dbReference type="GeneCards" id="COQ9"/>
<dbReference type="GeneReviews" id="COQ9"/>
<dbReference type="HGNC" id="HGNC:25302">
    <property type="gene designation" value="COQ9"/>
</dbReference>
<dbReference type="HPA" id="ENSG00000088682">
    <property type="expression patterns" value="Tissue enhanced (skeletal muscle, tongue)"/>
</dbReference>
<dbReference type="MalaCards" id="COQ9"/>
<dbReference type="MIM" id="612837">
    <property type="type" value="gene"/>
</dbReference>
<dbReference type="MIM" id="614654">
    <property type="type" value="phenotype"/>
</dbReference>
<dbReference type="neXtProt" id="NX_O75208"/>
<dbReference type="OpenTargets" id="ENSG00000088682"/>
<dbReference type="Orphanet" id="319678">
    <property type="disease" value="Encephalopathy-hypertrophic cardiomyopathy-renal tubular disease syndrome"/>
</dbReference>
<dbReference type="PharmGKB" id="PA142672085"/>
<dbReference type="VEuPathDB" id="HostDB:ENSG00000088682"/>
<dbReference type="eggNOG" id="KOG2969">
    <property type="taxonomic scope" value="Eukaryota"/>
</dbReference>
<dbReference type="GeneTree" id="ENSGT00390000009328"/>
<dbReference type="HOGENOM" id="CLU_057411_0_2_1"/>
<dbReference type="InParanoid" id="O75208"/>
<dbReference type="OMA" id="CAGFGWN"/>
<dbReference type="OrthoDB" id="619536at2759"/>
<dbReference type="PAN-GO" id="O75208">
    <property type="GO annotations" value="3 GO annotations based on evolutionary models"/>
</dbReference>
<dbReference type="PhylomeDB" id="O75208"/>
<dbReference type="TreeFam" id="TF324653"/>
<dbReference type="PathwayCommons" id="O75208"/>
<dbReference type="Reactome" id="R-HSA-2142789">
    <property type="pathway name" value="Ubiquinol biosynthesis"/>
</dbReference>
<dbReference type="SignaLink" id="O75208"/>
<dbReference type="UniPathway" id="UPA00232"/>
<dbReference type="BioGRID-ORCS" id="57017">
    <property type="hits" value="22 hits in 1165 CRISPR screens"/>
</dbReference>
<dbReference type="ChiTaRS" id="COQ9">
    <property type="organism name" value="human"/>
</dbReference>
<dbReference type="EvolutionaryTrace" id="O75208"/>
<dbReference type="GeneWiki" id="COQ9"/>
<dbReference type="GenomeRNAi" id="57017"/>
<dbReference type="Pharos" id="O75208">
    <property type="development level" value="Tbio"/>
</dbReference>
<dbReference type="PRO" id="PR:O75208"/>
<dbReference type="Proteomes" id="UP000005640">
    <property type="component" value="Chromosome 16"/>
</dbReference>
<dbReference type="RNAct" id="O75208">
    <property type="molecule type" value="protein"/>
</dbReference>
<dbReference type="Bgee" id="ENSG00000088682">
    <property type="expression patterns" value="Expressed in apex of heart and 131 other cell types or tissues"/>
</dbReference>
<dbReference type="ExpressionAtlas" id="O75208">
    <property type="expression patterns" value="baseline and differential"/>
</dbReference>
<dbReference type="GO" id="GO:0005743">
    <property type="term" value="C:mitochondrial inner membrane"/>
    <property type="evidence" value="ECO:0000314"/>
    <property type="project" value="ComplexPortal"/>
</dbReference>
<dbReference type="GO" id="GO:0005739">
    <property type="term" value="C:mitochondrion"/>
    <property type="evidence" value="ECO:0000314"/>
    <property type="project" value="UniProt"/>
</dbReference>
<dbReference type="GO" id="GO:0110142">
    <property type="term" value="C:ubiquinone biosynthesis complex"/>
    <property type="evidence" value="ECO:0000353"/>
    <property type="project" value="ComplexPortal"/>
</dbReference>
<dbReference type="GO" id="GO:0008047">
    <property type="term" value="F:enzyme activator activity"/>
    <property type="evidence" value="ECO:0007669"/>
    <property type="project" value="Ensembl"/>
</dbReference>
<dbReference type="GO" id="GO:0019840">
    <property type="term" value="F:isoprenoid binding"/>
    <property type="evidence" value="ECO:0000314"/>
    <property type="project" value="UniProtKB"/>
</dbReference>
<dbReference type="GO" id="GO:0008289">
    <property type="term" value="F:lipid binding"/>
    <property type="evidence" value="ECO:0000314"/>
    <property type="project" value="UniProtKB"/>
</dbReference>
<dbReference type="GO" id="GO:0042803">
    <property type="term" value="F:protein homodimerization activity"/>
    <property type="evidence" value="ECO:0000314"/>
    <property type="project" value="UniProtKB"/>
</dbReference>
<dbReference type="GO" id="GO:0006120">
    <property type="term" value="P:mitochondrial electron transport, NADH to ubiquinone"/>
    <property type="evidence" value="ECO:0007669"/>
    <property type="project" value="Ensembl"/>
</dbReference>
<dbReference type="GO" id="GO:0006744">
    <property type="term" value="P:ubiquinone biosynthetic process"/>
    <property type="evidence" value="ECO:0000314"/>
    <property type="project" value="UniProtKB"/>
</dbReference>
<dbReference type="FunFam" id="1.10.357.10:FF:000004">
    <property type="entry name" value="Ubiquinone biosynthesis protein COQ9, mitochondrial"/>
    <property type="match status" value="1"/>
</dbReference>
<dbReference type="Gene3D" id="1.10.357.10">
    <property type="entry name" value="Tetracycline Repressor, domain 2"/>
    <property type="match status" value="1"/>
</dbReference>
<dbReference type="InterPro" id="IPR013718">
    <property type="entry name" value="COQ9_C"/>
</dbReference>
<dbReference type="InterPro" id="IPR048674">
    <property type="entry name" value="COQ9_HTH"/>
</dbReference>
<dbReference type="InterPro" id="IPR012762">
    <property type="entry name" value="Ubiq_biosynth_COQ9"/>
</dbReference>
<dbReference type="NCBIfam" id="TIGR02396">
    <property type="entry name" value="diverge_rpsU"/>
    <property type="match status" value="1"/>
</dbReference>
<dbReference type="PANTHER" id="PTHR21427">
    <property type="entry name" value="UBIQUINONE BIOSYNTHESIS PROTEIN COQ9, MITOCHONDRIAL"/>
    <property type="match status" value="1"/>
</dbReference>
<dbReference type="PANTHER" id="PTHR21427:SF19">
    <property type="entry name" value="UBIQUINONE BIOSYNTHESIS PROTEIN COQ9, MITOCHONDRIAL"/>
    <property type="match status" value="1"/>
</dbReference>
<dbReference type="Pfam" id="PF08511">
    <property type="entry name" value="COQ9"/>
    <property type="match status" value="1"/>
</dbReference>
<dbReference type="Pfam" id="PF21392">
    <property type="entry name" value="COQ9_N"/>
    <property type="match status" value="1"/>
</dbReference>
<gene>
    <name evidence="12" type="primary">COQ9</name>
    <name type="synonym">C16orf49</name>
    <name type="ORF">HSPC326</name>
    <name type="ORF">PSEC0129</name>
</gene>
<sequence length="318" mass="35509">MAAAAVSGALGRAGWRLLQLRCLPVARCRQALVPRAFHASAVGLRSSDEQKQQPPNSFSQQHSETQGAEKPDPESSHSPPRYTDQGGEEEEDYESEEQLQHRILTAALEFVPAHGWTAEAIAEGAQSLGLSSAAASMFGKDGSELILHFVTQCNTRLTRVLEEEQKLVQLGQAEKRKTDQFLRDAVETRLRMLIPYIEHWPRALSILMLPHNIPSSLSLLTSMVDDMWHYAGDQSTDFNWYTRRAMLAAIYNTTELVMMQDSSPDFEDTWRFLENRVNDAMNMGHTAKQVKSTGEALVQGLMGAAVTLKNLTGLNQRR</sequence>
<evidence type="ECO:0000250" key="1">
    <source>
        <dbReference type="UniProtKB" id="Q8K1Z0"/>
    </source>
</evidence>
<evidence type="ECO:0000255" key="2"/>
<evidence type="ECO:0000256" key="3">
    <source>
        <dbReference type="SAM" id="MobiDB-lite"/>
    </source>
</evidence>
<evidence type="ECO:0000269" key="4">
    <source>
    </source>
</evidence>
<evidence type="ECO:0000269" key="5">
    <source>
    </source>
</evidence>
<evidence type="ECO:0000269" key="6">
    <source>
    </source>
</evidence>
<evidence type="ECO:0000269" key="7">
    <source>
    </source>
</evidence>
<evidence type="ECO:0000269" key="8">
    <source>
    </source>
</evidence>
<evidence type="ECO:0000269" key="9">
    <source>
    </source>
</evidence>
<evidence type="ECO:0000303" key="10">
    <source>
    </source>
</evidence>
<evidence type="ECO:0000305" key="11"/>
<evidence type="ECO:0000312" key="12">
    <source>
        <dbReference type="HGNC" id="HGNC:25302"/>
    </source>
</evidence>
<evidence type="ECO:0007744" key="13">
    <source>
        <dbReference type="PDB" id="4RHP"/>
    </source>
</evidence>
<evidence type="ECO:0007744" key="14">
    <source>
        <dbReference type="PDB" id="6AWL"/>
    </source>
</evidence>
<evidence type="ECO:0007744" key="15">
    <source>
        <dbReference type="PDB" id="6DEW"/>
    </source>
</evidence>
<evidence type="ECO:0007744" key="16">
    <source>
        <dbReference type="PDB" id="7SSP"/>
    </source>
</evidence>
<evidence type="ECO:0007744" key="17">
    <source>
        <dbReference type="PDB" id="7SSS"/>
    </source>
</evidence>
<evidence type="ECO:0007829" key="18">
    <source>
        <dbReference type="PDB" id="6AWL"/>
    </source>
</evidence>
<proteinExistence type="evidence at protein level"/>